<proteinExistence type="inferred from homology"/>
<comment type="function">
    <text evidence="1">Sequence-specific endonuclease that cleaves unmethylated GATC sequences. It is involved in DNA mismatch repair.</text>
</comment>
<comment type="subcellular location">
    <subcellularLocation>
        <location evidence="1">Cytoplasm</location>
    </subcellularLocation>
</comment>
<comment type="similarity">
    <text evidence="1">Belongs to the MutH family.</text>
</comment>
<gene>
    <name evidence="1" type="primary">mutH</name>
    <name type="ordered locus">ECH74115_4098</name>
</gene>
<name>MUTH_ECO5E</name>
<reference key="1">
    <citation type="journal article" date="2011" name="Proc. Natl. Acad. Sci. U.S.A.">
        <title>Genomic anatomy of Escherichia coli O157:H7 outbreaks.</title>
        <authorList>
            <person name="Eppinger M."/>
            <person name="Mammel M.K."/>
            <person name="Leclerc J.E."/>
            <person name="Ravel J."/>
            <person name="Cebula T.A."/>
        </authorList>
    </citation>
    <scope>NUCLEOTIDE SEQUENCE [LARGE SCALE GENOMIC DNA]</scope>
    <source>
        <strain>EC4115 / EHEC</strain>
    </source>
</reference>
<keyword id="KW-0963">Cytoplasm</keyword>
<keyword id="KW-0227">DNA damage</keyword>
<keyword id="KW-0234">DNA repair</keyword>
<keyword id="KW-0255">Endonuclease</keyword>
<keyword id="KW-0378">Hydrolase</keyword>
<keyword id="KW-0540">Nuclease</keyword>
<dbReference type="EMBL" id="CP001164">
    <property type="protein sequence ID" value="ACI39460.1"/>
    <property type="molecule type" value="Genomic_DNA"/>
</dbReference>
<dbReference type="RefSeq" id="WP_000082188.1">
    <property type="nucleotide sequence ID" value="NC_011353.1"/>
</dbReference>
<dbReference type="SMR" id="B5Z4E9"/>
<dbReference type="GeneID" id="93779167"/>
<dbReference type="KEGG" id="ecf:ECH74115_4098"/>
<dbReference type="HOGENOM" id="CLU_086669_0_0_6"/>
<dbReference type="GO" id="GO:0005737">
    <property type="term" value="C:cytoplasm"/>
    <property type="evidence" value="ECO:0007669"/>
    <property type="project" value="UniProtKB-SubCell"/>
</dbReference>
<dbReference type="GO" id="GO:0003677">
    <property type="term" value="F:DNA binding"/>
    <property type="evidence" value="ECO:0007669"/>
    <property type="project" value="InterPro"/>
</dbReference>
<dbReference type="GO" id="GO:0004519">
    <property type="term" value="F:endonuclease activity"/>
    <property type="evidence" value="ECO:0007669"/>
    <property type="project" value="UniProtKB-UniRule"/>
</dbReference>
<dbReference type="GO" id="GO:0006304">
    <property type="term" value="P:DNA modification"/>
    <property type="evidence" value="ECO:0007669"/>
    <property type="project" value="InterPro"/>
</dbReference>
<dbReference type="GO" id="GO:0006298">
    <property type="term" value="P:mismatch repair"/>
    <property type="evidence" value="ECO:0007669"/>
    <property type="project" value="UniProtKB-UniRule"/>
</dbReference>
<dbReference type="CDD" id="cd00583">
    <property type="entry name" value="MutH-like"/>
    <property type="match status" value="1"/>
</dbReference>
<dbReference type="FunFam" id="3.40.600.10:FF:000001">
    <property type="entry name" value="DNA mismatch repair protein MutH"/>
    <property type="match status" value="1"/>
</dbReference>
<dbReference type="Gene3D" id="3.40.600.10">
    <property type="entry name" value="DNA mismatch repair MutH/Restriction endonuclease, type II"/>
    <property type="match status" value="1"/>
</dbReference>
<dbReference type="HAMAP" id="MF_00759">
    <property type="entry name" value="MutH"/>
    <property type="match status" value="1"/>
</dbReference>
<dbReference type="InterPro" id="IPR004230">
    <property type="entry name" value="DNA_mismatch_repair_MutH"/>
</dbReference>
<dbReference type="InterPro" id="IPR011337">
    <property type="entry name" value="DNA_rep_MutH/RE_typeII_Sau3AI"/>
</dbReference>
<dbReference type="InterPro" id="IPR037057">
    <property type="entry name" value="DNA_rep_MutH/T2_RE_sf"/>
</dbReference>
<dbReference type="InterPro" id="IPR011335">
    <property type="entry name" value="Restrct_endonuc-II-like"/>
</dbReference>
<dbReference type="NCBIfam" id="TIGR02248">
    <property type="entry name" value="mutH_TIGR"/>
    <property type="match status" value="1"/>
</dbReference>
<dbReference type="NCBIfam" id="NF003458">
    <property type="entry name" value="PRK05070.1"/>
    <property type="match status" value="1"/>
</dbReference>
<dbReference type="Pfam" id="PF02976">
    <property type="entry name" value="MutH"/>
    <property type="match status" value="1"/>
</dbReference>
<dbReference type="SMART" id="SM00927">
    <property type="entry name" value="MutH"/>
    <property type="match status" value="1"/>
</dbReference>
<dbReference type="SUPFAM" id="SSF52980">
    <property type="entry name" value="Restriction endonuclease-like"/>
    <property type="match status" value="1"/>
</dbReference>
<evidence type="ECO:0000255" key="1">
    <source>
        <dbReference type="HAMAP-Rule" id="MF_00759"/>
    </source>
</evidence>
<organism>
    <name type="scientific">Escherichia coli O157:H7 (strain EC4115 / EHEC)</name>
    <dbReference type="NCBI Taxonomy" id="444450"/>
    <lineage>
        <taxon>Bacteria</taxon>
        <taxon>Pseudomonadati</taxon>
        <taxon>Pseudomonadota</taxon>
        <taxon>Gammaproteobacteria</taxon>
        <taxon>Enterobacterales</taxon>
        <taxon>Enterobacteriaceae</taxon>
        <taxon>Escherichia</taxon>
    </lineage>
</organism>
<sequence>MSQPRPLLSPPETEEQLLAQAQQLSGYTLGELAALAGLVTPENLKRDKGWIGVLLEIWLGASAGSKPEQDFAALGVELKTIPVDSLGRPLETTFVCVAPLTGNSGVTWETSHVRHKLKRVLWIPVEGERSIPLAQRRVGSPLLWSPNEEEDRQLREDWEELMDMIVLGQVERITARHGEYLQIRPKAANAKALTEAIGARGERILTLPRGFYLKKNFTSALLARHFLIQ</sequence>
<protein>
    <recommendedName>
        <fullName evidence="1">DNA mismatch repair protein MutH</fullName>
    </recommendedName>
    <alternativeName>
        <fullName evidence="1">Methyl-directed mismatch repair protein</fullName>
    </alternativeName>
</protein>
<accession>B5Z4E9</accession>
<feature type="chain" id="PRO_1000133461" description="DNA mismatch repair protein MutH">
    <location>
        <begin position="1"/>
        <end position="229"/>
    </location>
</feature>